<gene>
    <name evidence="1" type="primary">uvrA</name>
    <name type="ordered locus">SAR0813</name>
</gene>
<protein>
    <recommendedName>
        <fullName evidence="1">UvrABC system protein A</fullName>
        <shortName evidence="1">UvrA protein</shortName>
    </recommendedName>
    <alternativeName>
        <fullName evidence="1">Excinuclease ABC subunit A</fullName>
    </alternativeName>
</protein>
<dbReference type="EMBL" id="BX571856">
    <property type="protein sequence ID" value="CAG39823.1"/>
    <property type="molecule type" value="Genomic_DNA"/>
</dbReference>
<dbReference type="RefSeq" id="WP_000662687.1">
    <property type="nucleotide sequence ID" value="NC_002952.2"/>
</dbReference>
<dbReference type="SMR" id="Q6GIN2"/>
<dbReference type="KEGG" id="sar:SAR0813"/>
<dbReference type="HOGENOM" id="CLU_001370_0_2_9"/>
<dbReference type="Proteomes" id="UP000000596">
    <property type="component" value="Chromosome"/>
</dbReference>
<dbReference type="GO" id="GO:0005737">
    <property type="term" value="C:cytoplasm"/>
    <property type="evidence" value="ECO:0007669"/>
    <property type="project" value="UniProtKB-SubCell"/>
</dbReference>
<dbReference type="GO" id="GO:0009380">
    <property type="term" value="C:excinuclease repair complex"/>
    <property type="evidence" value="ECO:0007669"/>
    <property type="project" value="InterPro"/>
</dbReference>
<dbReference type="GO" id="GO:0005524">
    <property type="term" value="F:ATP binding"/>
    <property type="evidence" value="ECO:0007669"/>
    <property type="project" value="UniProtKB-UniRule"/>
</dbReference>
<dbReference type="GO" id="GO:0016887">
    <property type="term" value="F:ATP hydrolysis activity"/>
    <property type="evidence" value="ECO:0007669"/>
    <property type="project" value="InterPro"/>
</dbReference>
<dbReference type="GO" id="GO:0003677">
    <property type="term" value="F:DNA binding"/>
    <property type="evidence" value="ECO:0007669"/>
    <property type="project" value="UniProtKB-UniRule"/>
</dbReference>
<dbReference type="GO" id="GO:0009381">
    <property type="term" value="F:excinuclease ABC activity"/>
    <property type="evidence" value="ECO:0007669"/>
    <property type="project" value="UniProtKB-UniRule"/>
</dbReference>
<dbReference type="GO" id="GO:0008270">
    <property type="term" value="F:zinc ion binding"/>
    <property type="evidence" value="ECO:0007669"/>
    <property type="project" value="UniProtKB-UniRule"/>
</dbReference>
<dbReference type="GO" id="GO:0006289">
    <property type="term" value="P:nucleotide-excision repair"/>
    <property type="evidence" value="ECO:0007669"/>
    <property type="project" value="UniProtKB-UniRule"/>
</dbReference>
<dbReference type="GO" id="GO:0009432">
    <property type="term" value="P:SOS response"/>
    <property type="evidence" value="ECO:0007669"/>
    <property type="project" value="UniProtKB-UniRule"/>
</dbReference>
<dbReference type="CDD" id="cd03270">
    <property type="entry name" value="ABC_UvrA_I"/>
    <property type="match status" value="1"/>
</dbReference>
<dbReference type="CDD" id="cd03271">
    <property type="entry name" value="ABC_UvrA_II"/>
    <property type="match status" value="1"/>
</dbReference>
<dbReference type="FunFam" id="1.20.1580.10:FF:000002">
    <property type="entry name" value="UvrABC system protein A"/>
    <property type="match status" value="1"/>
</dbReference>
<dbReference type="FunFam" id="3.40.50.300:FF:000028">
    <property type="entry name" value="UvrABC system protein A"/>
    <property type="match status" value="1"/>
</dbReference>
<dbReference type="Gene3D" id="3.30.190.20">
    <property type="match status" value="1"/>
</dbReference>
<dbReference type="Gene3D" id="1.10.8.280">
    <property type="entry name" value="ABC transporter ATPase domain-like"/>
    <property type="match status" value="1"/>
</dbReference>
<dbReference type="Gene3D" id="1.20.1580.10">
    <property type="entry name" value="ABC transporter ATPase like domain"/>
    <property type="match status" value="3"/>
</dbReference>
<dbReference type="Gene3D" id="3.40.50.300">
    <property type="entry name" value="P-loop containing nucleotide triphosphate hydrolases"/>
    <property type="match status" value="3"/>
</dbReference>
<dbReference type="HAMAP" id="MF_00205">
    <property type="entry name" value="UvrA"/>
    <property type="match status" value="1"/>
</dbReference>
<dbReference type="InterPro" id="IPR003439">
    <property type="entry name" value="ABC_transporter-like_ATP-bd"/>
</dbReference>
<dbReference type="InterPro" id="IPR017871">
    <property type="entry name" value="ABC_transporter-like_CS"/>
</dbReference>
<dbReference type="InterPro" id="IPR027417">
    <property type="entry name" value="P-loop_NTPase"/>
</dbReference>
<dbReference type="InterPro" id="IPR004602">
    <property type="entry name" value="UvrA"/>
</dbReference>
<dbReference type="InterPro" id="IPR041552">
    <property type="entry name" value="UvrA_DNA-bd"/>
</dbReference>
<dbReference type="InterPro" id="IPR041102">
    <property type="entry name" value="UvrA_inter"/>
</dbReference>
<dbReference type="NCBIfam" id="NF001503">
    <property type="entry name" value="PRK00349.1"/>
    <property type="match status" value="1"/>
</dbReference>
<dbReference type="NCBIfam" id="TIGR00630">
    <property type="entry name" value="uvra"/>
    <property type="match status" value="1"/>
</dbReference>
<dbReference type="PANTHER" id="PTHR43152">
    <property type="entry name" value="UVRABC SYSTEM PROTEIN A"/>
    <property type="match status" value="1"/>
</dbReference>
<dbReference type="PANTHER" id="PTHR43152:SF3">
    <property type="entry name" value="UVRABC SYSTEM PROTEIN A"/>
    <property type="match status" value="1"/>
</dbReference>
<dbReference type="Pfam" id="PF17755">
    <property type="entry name" value="UvrA_DNA-bind"/>
    <property type="match status" value="1"/>
</dbReference>
<dbReference type="Pfam" id="PF17760">
    <property type="entry name" value="UvrA_inter"/>
    <property type="match status" value="1"/>
</dbReference>
<dbReference type="SUPFAM" id="SSF52540">
    <property type="entry name" value="P-loop containing nucleoside triphosphate hydrolases"/>
    <property type="match status" value="2"/>
</dbReference>
<dbReference type="PROSITE" id="PS00211">
    <property type="entry name" value="ABC_TRANSPORTER_1"/>
    <property type="match status" value="2"/>
</dbReference>
<dbReference type="PROSITE" id="PS50893">
    <property type="entry name" value="ABC_TRANSPORTER_2"/>
    <property type="match status" value="1"/>
</dbReference>
<evidence type="ECO:0000255" key="1">
    <source>
        <dbReference type="HAMAP-Rule" id="MF_00205"/>
    </source>
</evidence>
<keyword id="KW-0067">ATP-binding</keyword>
<keyword id="KW-0963">Cytoplasm</keyword>
<keyword id="KW-0227">DNA damage</keyword>
<keyword id="KW-0228">DNA excision</keyword>
<keyword id="KW-0234">DNA repair</keyword>
<keyword id="KW-0238">DNA-binding</keyword>
<keyword id="KW-0267">Excision nuclease</keyword>
<keyword id="KW-0479">Metal-binding</keyword>
<keyword id="KW-0547">Nucleotide-binding</keyword>
<keyword id="KW-0677">Repeat</keyword>
<keyword id="KW-0742">SOS response</keyword>
<keyword id="KW-0862">Zinc</keyword>
<keyword id="KW-0863">Zinc-finger</keyword>
<proteinExistence type="inferred from homology"/>
<name>UVRA_STAAR</name>
<accession>Q6GIN2</accession>
<reference key="1">
    <citation type="journal article" date="2004" name="Proc. Natl. Acad. Sci. U.S.A.">
        <title>Complete genomes of two clinical Staphylococcus aureus strains: evidence for the rapid evolution of virulence and drug resistance.</title>
        <authorList>
            <person name="Holden M.T.G."/>
            <person name="Feil E.J."/>
            <person name="Lindsay J.A."/>
            <person name="Peacock S.J."/>
            <person name="Day N.P.J."/>
            <person name="Enright M.C."/>
            <person name="Foster T.J."/>
            <person name="Moore C.E."/>
            <person name="Hurst L."/>
            <person name="Atkin R."/>
            <person name="Barron A."/>
            <person name="Bason N."/>
            <person name="Bentley S.D."/>
            <person name="Chillingworth C."/>
            <person name="Chillingworth T."/>
            <person name="Churcher C."/>
            <person name="Clark L."/>
            <person name="Corton C."/>
            <person name="Cronin A."/>
            <person name="Doggett J."/>
            <person name="Dowd L."/>
            <person name="Feltwell T."/>
            <person name="Hance Z."/>
            <person name="Harris B."/>
            <person name="Hauser H."/>
            <person name="Holroyd S."/>
            <person name="Jagels K."/>
            <person name="James K.D."/>
            <person name="Lennard N."/>
            <person name="Line A."/>
            <person name="Mayes R."/>
            <person name="Moule S."/>
            <person name="Mungall K."/>
            <person name="Ormond D."/>
            <person name="Quail M.A."/>
            <person name="Rabbinowitsch E."/>
            <person name="Rutherford K.M."/>
            <person name="Sanders M."/>
            <person name="Sharp S."/>
            <person name="Simmonds M."/>
            <person name="Stevens K."/>
            <person name="Whitehead S."/>
            <person name="Barrell B.G."/>
            <person name="Spratt B.G."/>
            <person name="Parkhill J."/>
        </authorList>
    </citation>
    <scope>NUCLEOTIDE SEQUENCE [LARGE SCALE GENOMIC DNA]</scope>
    <source>
        <strain>MRSA252</strain>
    </source>
</reference>
<feature type="chain" id="PRO_0000093092" description="UvrABC system protein A">
    <location>
        <begin position="1"/>
        <end position="948"/>
    </location>
</feature>
<feature type="domain" description="ABC transporter 1" evidence="1">
    <location>
        <begin position="309"/>
        <end position="587"/>
    </location>
</feature>
<feature type="domain" description="ABC transporter 2" evidence="1">
    <location>
        <begin position="607"/>
        <end position="935"/>
    </location>
</feature>
<feature type="zinc finger region" description="C4-type" evidence="1">
    <location>
        <begin position="252"/>
        <end position="279"/>
    </location>
</feature>
<feature type="zinc finger region" description="C4-type" evidence="1">
    <location>
        <begin position="738"/>
        <end position="764"/>
    </location>
</feature>
<feature type="binding site" evidence="1">
    <location>
        <begin position="33"/>
        <end position="40"/>
    </location>
    <ligand>
        <name>ATP</name>
        <dbReference type="ChEBI" id="CHEBI:30616"/>
    </ligand>
</feature>
<feature type="binding site" evidence="1">
    <location>
        <begin position="639"/>
        <end position="646"/>
    </location>
    <ligand>
        <name>ATP</name>
        <dbReference type="ChEBI" id="CHEBI:30616"/>
    </ligand>
</feature>
<organism>
    <name type="scientific">Staphylococcus aureus (strain MRSA252)</name>
    <dbReference type="NCBI Taxonomy" id="282458"/>
    <lineage>
        <taxon>Bacteria</taxon>
        <taxon>Bacillati</taxon>
        <taxon>Bacillota</taxon>
        <taxon>Bacilli</taxon>
        <taxon>Bacillales</taxon>
        <taxon>Staphylococcaceae</taxon>
        <taxon>Staphylococcus</taxon>
    </lineage>
</organism>
<comment type="function">
    <text evidence="1">The UvrABC repair system catalyzes the recognition and processing of DNA lesions. UvrA is an ATPase and a DNA-binding protein. A damage recognition complex composed of 2 UvrA and 2 UvrB subunits scans DNA for abnormalities. When the presence of a lesion has been verified by UvrB, the UvrA molecules dissociate.</text>
</comment>
<comment type="subunit">
    <text evidence="1">Forms a heterotetramer with UvrB during the search for lesions.</text>
</comment>
<comment type="subcellular location">
    <subcellularLocation>
        <location evidence="1">Cytoplasm</location>
    </subcellularLocation>
</comment>
<comment type="similarity">
    <text evidence="1">Belongs to the ABC transporter superfamily. UvrA family.</text>
</comment>
<sequence length="948" mass="105367">MKEPSIVVKGARAHNLKDIDIELPKNKLIVMTGLSGSGKSSLAFDTIYAEGQRRYVESLSAYARQFLGQMDKPDVDTIEGLSPAISIDQKTTSKNPRSTVATVTEIYDYIRLLYARVGKPYCPNHNIEIESQTVQQMVDRIMELEARTKIQLLAPVIAHRKGSHEKLIEDIGKKGYVRLRIDGEIVDVNDVPTLDKNKNHTIEVVVDRLVVKDGIETRLADSIETALELSEGQLTVDVIDGEDLKFSESHACPICGFSIGELEPRMFSFNSPFGACPTCDGLGQKLTVDVDLVVPDKDKTLNEGAIEPWIPTSSDFYPTLLKRVCEVYKINMDKPFKKLTERQRDILLYGSGDKEIEFTFTQRQGGTRKRTMVFEGVVPNISRRFHESPSEYTREMMSKYMTELPCETCHGKRLSREALSVYVGGLNIGEVVEYSISQALNYYKNINLSEQDQAIANQILKEIISRLTFLNNVGLEYLTLNRASGTLSGGEAQRIRLATQIGSRLTGVLYVLDEPSIGLHQRDNDRLINTLKEMRDLGNTLIVVEHDDDTMRAADYLVDIGPGAGEHGGQIVSSGTPQKVMKDKKSLTGQYLSGKKRIEVPEYRRPASDRKISIRGARSNNLKGVDVDIPLSIMTVVTGVSGSGKSSLVNEVLYKSLAQKINKSKVKPGLYDKIEGIDQLDKIIDIDQSPIGRTPRSNPATYTGVFDDIRDVFAQTNEAKIRGYQKGRFSFNVKGGRCEACKGDGIIKIEMHFLPDVYVPCEVCDGKRYNRETLEVTYKGKNIADILEMTVEEATQFFENIPKIKRKLQTLVDVGLGYVTLGQQATTLSGGEAQRVKLASELHKRSTGKSIYILDEPTTGLHVDDISRLLKVLNRLVENGDTVVIIEHNLDVIKTADYIIDLGPEGGSGGGTIVATGTPEDIAQTKSSYTGKYLKEVLERDKQNTEDK</sequence>